<feature type="chain" id="PRO_0000283239" description="Putative F-box/kelch-repeat protein At4g02310">
    <location>
        <begin position="1"/>
        <end position="349"/>
    </location>
</feature>
<feature type="domain" description="F-box">
    <location>
        <begin position="11"/>
        <end position="58"/>
    </location>
</feature>
<feature type="repeat" description="Kelch">
    <location>
        <begin position="154"/>
        <end position="204"/>
    </location>
</feature>
<reference key="1">
    <citation type="journal article" date="1999" name="Nature">
        <title>Sequence and analysis of chromosome 4 of the plant Arabidopsis thaliana.</title>
        <authorList>
            <person name="Mayer K.F.X."/>
            <person name="Schueller C."/>
            <person name="Wambutt R."/>
            <person name="Murphy G."/>
            <person name="Volckaert G."/>
            <person name="Pohl T."/>
            <person name="Duesterhoeft A."/>
            <person name="Stiekema W."/>
            <person name="Entian K.-D."/>
            <person name="Terryn N."/>
            <person name="Harris B."/>
            <person name="Ansorge W."/>
            <person name="Brandt P."/>
            <person name="Grivell L.A."/>
            <person name="Rieger M."/>
            <person name="Weichselgartner M."/>
            <person name="de Simone V."/>
            <person name="Obermaier B."/>
            <person name="Mache R."/>
            <person name="Mueller M."/>
            <person name="Kreis M."/>
            <person name="Delseny M."/>
            <person name="Puigdomenech P."/>
            <person name="Watson M."/>
            <person name="Schmidtheini T."/>
            <person name="Reichert B."/>
            <person name="Portetelle D."/>
            <person name="Perez-Alonso M."/>
            <person name="Boutry M."/>
            <person name="Bancroft I."/>
            <person name="Vos P."/>
            <person name="Hoheisel J."/>
            <person name="Zimmermann W."/>
            <person name="Wedler H."/>
            <person name="Ridley P."/>
            <person name="Langham S.-A."/>
            <person name="McCullagh B."/>
            <person name="Bilham L."/>
            <person name="Robben J."/>
            <person name="van der Schueren J."/>
            <person name="Grymonprez B."/>
            <person name="Chuang Y.-J."/>
            <person name="Vandenbussche F."/>
            <person name="Braeken M."/>
            <person name="Weltjens I."/>
            <person name="Voet M."/>
            <person name="Bastiaens I."/>
            <person name="Aert R."/>
            <person name="Defoor E."/>
            <person name="Weitzenegger T."/>
            <person name="Bothe G."/>
            <person name="Ramsperger U."/>
            <person name="Hilbert H."/>
            <person name="Braun M."/>
            <person name="Holzer E."/>
            <person name="Brandt A."/>
            <person name="Peters S."/>
            <person name="van Staveren M."/>
            <person name="Dirkse W."/>
            <person name="Mooijman P."/>
            <person name="Klein Lankhorst R."/>
            <person name="Rose M."/>
            <person name="Hauf J."/>
            <person name="Koetter P."/>
            <person name="Berneiser S."/>
            <person name="Hempel S."/>
            <person name="Feldpausch M."/>
            <person name="Lamberth S."/>
            <person name="Van den Daele H."/>
            <person name="De Keyser A."/>
            <person name="Buysshaert C."/>
            <person name="Gielen J."/>
            <person name="Villarroel R."/>
            <person name="De Clercq R."/>
            <person name="van Montagu M."/>
            <person name="Rogers J."/>
            <person name="Cronin A."/>
            <person name="Quail M.A."/>
            <person name="Bray-Allen S."/>
            <person name="Clark L."/>
            <person name="Doggett J."/>
            <person name="Hall S."/>
            <person name="Kay M."/>
            <person name="Lennard N."/>
            <person name="McLay K."/>
            <person name="Mayes R."/>
            <person name="Pettett A."/>
            <person name="Rajandream M.A."/>
            <person name="Lyne M."/>
            <person name="Benes V."/>
            <person name="Rechmann S."/>
            <person name="Borkova D."/>
            <person name="Bloecker H."/>
            <person name="Scharfe M."/>
            <person name="Grimm M."/>
            <person name="Loehnert T.-H."/>
            <person name="Dose S."/>
            <person name="de Haan M."/>
            <person name="Maarse A.C."/>
            <person name="Schaefer M."/>
            <person name="Mueller-Auer S."/>
            <person name="Gabel C."/>
            <person name="Fuchs M."/>
            <person name="Fartmann B."/>
            <person name="Granderath K."/>
            <person name="Dauner D."/>
            <person name="Herzl A."/>
            <person name="Neumann S."/>
            <person name="Argiriou A."/>
            <person name="Vitale D."/>
            <person name="Liguori R."/>
            <person name="Piravandi E."/>
            <person name="Massenet O."/>
            <person name="Quigley F."/>
            <person name="Clabauld G."/>
            <person name="Muendlein A."/>
            <person name="Felber R."/>
            <person name="Schnabl S."/>
            <person name="Hiller R."/>
            <person name="Schmidt W."/>
            <person name="Lecharny A."/>
            <person name="Aubourg S."/>
            <person name="Chefdor F."/>
            <person name="Cooke R."/>
            <person name="Berger C."/>
            <person name="Monfort A."/>
            <person name="Casacuberta E."/>
            <person name="Gibbons T."/>
            <person name="Weber N."/>
            <person name="Vandenbol M."/>
            <person name="Bargues M."/>
            <person name="Terol J."/>
            <person name="Torres A."/>
            <person name="Perez-Perez A."/>
            <person name="Purnelle B."/>
            <person name="Bent E."/>
            <person name="Johnson S."/>
            <person name="Tacon D."/>
            <person name="Jesse T."/>
            <person name="Heijnen L."/>
            <person name="Schwarz S."/>
            <person name="Scholler P."/>
            <person name="Heber S."/>
            <person name="Francs P."/>
            <person name="Bielke C."/>
            <person name="Frishman D."/>
            <person name="Haase D."/>
            <person name="Lemcke K."/>
            <person name="Mewes H.-W."/>
            <person name="Stocker S."/>
            <person name="Zaccaria P."/>
            <person name="Bevan M."/>
            <person name="Wilson R.K."/>
            <person name="de la Bastide M."/>
            <person name="Habermann K."/>
            <person name="Parnell L."/>
            <person name="Dedhia N."/>
            <person name="Gnoj L."/>
            <person name="Schutz K."/>
            <person name="Huang E."/>
            <person name="Spiegel L."/>
            <person name="Sekhon M."/>
            <person name="Murray J."/>
            <person name="Sheet P."/>
            <person name="Cordes M."/>
            <person name="Abu-Threideh J."/>
            <person name="Stoneking T."/>
            <person name="Kalicki J."/>
            <person name="Graves T."/>
            <person name="Harmon G."/>
            <person name="Edwards J."/>
            <person name="Latreille P."/>
            <person name="Courtney L."/>
            <person name="Cloud J."/>
            <person name="Abbott A."/>
            <person name="Scott K."/>
            <person name="Johnson D."/>
            <person name="Minx P."/>
            <person name="Bentley D."/>
            <person name="Fulton B."/>
            <person name="Miller N."/>
            <person name="Greco T."/>
            <person name="Kemp K."/>
            <person name="Kramer J."/>
            <person name="Fulton L."/>
            <person name="Mardis E."/>
            <person name="Dante M."/>
            <person name="Pepin K."/>
            <person name="Hillier L.W."/>
            <person name="Nelson J."/>
            <person name="Spieth J."/>
            <person name="Ryan E."/>
            <person name="Andrews S."/>
            <person name="Geisel C."/>
            <person name="Layman D."/>
            <person name="Du H."/>
            <person name="Ali J."/>
            <person name="Berghoff A."/>
            <person name="Jones K."/>
            <person name="Drone K."/>
            <person name="Cotton M."/>
            <person name="Joshu C."/>
            <person name="Antonoiu B."/>
            <person name="Zidanic M."/>
            <person name="Strong C."/>
            <person name="Sun H."/>
            <person name="Lamar B."/>
            <person name="Yordan C."/>
            <person name="Ma P."/>
            <person name="Zhong J."/>
            <person name="Preston R."/>
            <person name="Vil D."/>
            <person name="Shekher M."/>
            <person name="Matero A."/>
            <person name="Shah R."/>
            <person name="Swaby I.K."/>
            <person name="O'Shaughnessy A."/>
            <person name="Rodriguez M."/>
            <person name="Hoffman J."/>
            <person name="Till S."/>
            <person name="Granat S."/>
            <person name="Shohdy N."/>
            <person name="Hasegawa A."/>
            <person name="Hameed A."/>
            <person name="Lodhi M."/>
            <person name="Johnson A."/>
            <person name="Chen E."/>
            <person name="Marra M.A."/>
            <person name="Martienssen R."/>
            <person name="McCombie W.R."/>
        </authorList>
    </citation>
    <scope>NUCLEOTIDE SEQUENCE [LARGE SCALE GENOMIC DNA]</scope>
    <source>
        <strain>cv. Columbia</strain>
    </source>
</reference>
<reference key="2">
    <citation type="journal article" date="2017" name="Plant J.">
        <title>Araport11: a complete reannotation of the Arabidopsis thaliana reference genome.</title>
        <authorList>
            <person name="Cheng C.Y."/>
            <person name="Krishnakumar V."/>
            <person name="Chan A.P."/>
            <person name="Thibaud-Nissen F."/>
            <person name="Schobel S."/>
            <person name="Town C.D."/>
        </authorList>
    </citation>
    <scope>GENOME REANNOTATION</scope>
    <source>
        <strain>cv. Columbia</strain>
    </source>
</reference>
<name>FBK79_ARATH</name>
<proteinExistence type="predicted"/>
<sequence>MSTTAKEAPSSLFSLLPNDIVLNILARVPRWYHPILSCVSKNLRFLVSSSELKITRSLLEKDRFYVCFQEHSNSPSLTTYHWFSFTENRRCLVSIPFTSPVEPYFATLTLGPEIYFVGKSRSMWILDSRSGKLRQGPRPLVACDQAAVGLVNDKIYVFGGIDDMNKRYYEGIHAQVFDLKTQTWHVGPNLSVKLACLNRSVVTPSLGRKIYVRGTDRDVTIYDIKDGKCDKIIPADDFSSGDMCVVDNVIYMYYHNVGLMWYESKEKQWSVVHGLEFNGVFNSIAIAEYNGKLAFLWHDRNKREIWCAMINLYGSSKVAIRGRVEWSHRLLSDLPSNYNFKHFTICTDY</sequence>
<organism>
    <name type="scientific">Arabidopsis thaliana</name>
    <name type="common">Mouse-ear cress</name>
    <dbReference type="NCBI Taxonomy" id="3702"/>
    <lineage>
        <taxon>Eukaryota</taxon>
        <taxon>Viridiplantae</taxon>
        <taxon>Streptophyta</taxon>
        <taxon>Embryophyta</taxon>
        <taxon>Tracheophyta</taxon>
        <taxon>Spermatophyta</taxon>
        <taxon>Magnoliopsida</taxon>
        <taxon>eudicotyledons</taxon>
        <taxon>Gunneridae</taxon>
        <taxon>Pentapetalae</taxon>
        <taxon>rosids</taxon>
        <taxon>malvids</taxon>
        <taxon>Brassicales</taxon>
        <taxon>Brassicaceae</taxon>
        <taxon>Camelineae</taxon>
        <taxon>Arabidopsis</taxon>
    </lineage>
</organism>
<gene>
    <name type="ordered locus">At4g02310</name>
    <name type="ORF">T2H3.7</name>
</gene>
<protein>
    <recommendedName>
        <fullName>Putative F-box/kelch-repeat protein At4g02310</fullName>
    </recommendedName>
</protein>
<dbReference type="EMBL" id="AF075597">
    <property type="protein sequence ID" value="AAC28169.1"/>
    <property type="molecule type" value="Genomic_DNA"/>
</dbReference>
<dbReference type="EMBL" id="AL161494">
    <property type="protein sequence ID" value="CAB80724.1"/>
    <property type="molecule type" value="Genomic_DNA"/>
</dbReference>
<dbReference type="EMBL" id="CP002687">
    <property type="protein sequence ID" value="AEE82153.1"/>
    <property type="molecule type" value="Genomic_DNA"/>
</dbReference>
<dbReference type="PIR" id="T01417">
    <property type="entry name" value="T01417"/>
</dbReference>
<dbReference type="RefSeq" id="NP_192140.1">
    <property type="nucleotide sequence ID" value="NM_116464.1"/>
</dbReference>
<dbReference type="SMR" id="O81414"/>
<dbReference type="BioGRID" id="13361">
    <property type="interactions" value="1"/>
</dbReference>
<dbReference type="FunCoup" id="O81414">
    <property type="interactions" value="7"/>
</dbReference>
<dbReference type="STRING" id="3702.O81414"/>
<dbReference type="iPTMnet" id="O81414"/>
<dbReference type="PaxDb" id="3702-AT4G02310.1"/>
<dbReference type="EnsemblPlants" id="AT4G02310.1">
    <property type="protein sequence ID" value="AT4G02310.1"/>
    <property type="gene ID" value="AT4G02310"/>
</dbReference>
<dbReference type="GeneID" id="828070"/>
<dbReference type="Gramene" id="AT4G02310.1">
    <property type="protein sequence ID" value="AT4G02310.1"/>
    <property type="gene ID" value="AT4G02310"/>
</dbReference>
<dbReference type="KEGG" id="ath:AT4G02310"/>
<dbReference type="Araport" id="AT4G02310"/>
<dbReference type="TAIR" id="AT4G02310"/>
<dbReference type="eggNOG" id="KOG1072">
    <property type="taxonomic scope" value="Eukaryota"/>
</dbReference>
<dbReference type="HOGENOM" id="CLU_032521_0_0_1"/>
<dbReference type="InParanoid" id="O81414"/>
<dbReference type="OMA" id="MWILDTR"/>
<dbReference type="PhylomeDB" id="O81414"/>
<dbReference type="PRO" id="PR:O81414"/>
<dbReference type="Proteomes" id="UP000006548">
    <property type="component" value="Chromosome 4"/>
</dbReference>
<dbReference type="ExpressionAtlas" id="O81414">
    <property type="expression patterns" value="baseline and differential"/>
</dbReference>
<dbReference type="CDD" id="cd22152">
    <property type="entry name" value="F-box_AtAFR-like"/>
    <property type="match status" value="1"/>
</dbReference>
<dbReference type="Gene3D" id="2.120.10.80">
    <property type="entry name" value="Kelch-type beta propeller"/>
    <property type="match status" value="1"/>
</dbReference>
<dbReference type="InterPro" id="IPR036047">
    <property type="entry name" value="F-box-like_dom_sf"/>
</dbReference>
<dbReference type="InterPro" id="IPR050354">
    <property type="entry name" value="F-box/kelch-repeat_ARATH"/>
</dbReference>
<dbReference type="InterPro" id="IPR001810">
    <property type="entry name" value="F-box_dom"/>
</dbReference>
<dbReference type="InterPro" id="IPR015915">
    <property type="entry name" value="Kelch-typ_b-propeller"/>
</dbReference>
<dbReference type="PANTHER" id="PTHR24414:SF99">
    <property type="entry name" value="F-BOX DOMAIN-CONTAINING PROTEIN"/>
    <property type="match status" value="1"/>
</dbReference>
<dbReference type="PANTHER" id="PTHR24414">
    <property type="entry name" value="F-BOX/KELCH-REPEAT PROTEIN SKIP4"/>
    <property type="match status" value="1"/>
</dbReference>
<dbReference type="Pfam" id="PF00646">
    <property type="entry name" value="F-box"/>
    <property type="match status" value="1"/>
</dbReference>
<dbReference type="Pfam" id="PF25210">
    <property type="entry name" value="Kelch_FKB95"/>
    <property type="match status" value="1"/>
</dbReference>
<dbReference type="SMART" id="SM00256">
    <property type="entry name" value="FBOX"/>
    <property type="match status" value="1"/>
</dbReference>
<dbReference type="SUPFAM" id="SSF81383">
    <property type="entry name" value="F-box domain"/>
    <property type="match status" value="1"/>
</dbReference>
<dbReference type="SUPFAM" id="SSF117281">
    <property type="entry name" value="Kelch motif"/>
    <property type="match status" value="1"/>
</dbReference>
<accession>O81414</accession>
<keyword id="KW-0880">Kelch repeat</keyword>
<keyword id="KW-1185">Reference proteome</keyword>